<dbReference type="EC" id="2.7.1.148" evidence="1"/>
<dbReference type="EMBL" id="CP000393">
    <property type="protein sequence ID" value="ABG53663.1"/>
    <property type="molecule type" value="Genomic_DNA"/>
</dbReference>
<dbReference type="RefSeq" id="WP_011613980.1">
    <property type="nucleotide sequence ID" value="NC_008312.1"/>
</dbReference>
<dbReference type="SMR" id="Q10VR1"/>
<dbReference type="STRING" id="203124.Tery_4700"/>
<dbReference type="KEGG" id="ter:Tery_4700"/>
<dbReference type="eggNOG" id="COG1947">
    <property type="taxonomic scope" value="Bacteria"/>
</dbReference>
<dbReference type="HOGENOM" id="CLU_053057_1_1_3"/>
<dbReference type="OrthoDB" id="9809438at2"/>
<dbReference type="UniPathway" id="UPA00056">
    <property type="reaction ID" value="UER00094"/>
</dbReference>
<dbReference type="GO" id="GO:0050515">
    <property type="term" value="F:4-(cytidine 5'-diphospho)-2-C-methyl-D-erythritol kinase activity"/>
    <property type="evidence" value="ECO:0007669"/>
    <property type="project" value="UniProtKB-UniRule"/>
</dbReference>
<dbReference type="GO" id="GO:0005524">
    <property type="term" value="F:ATP binding"/>
    <property type="evidence" value="ECO:0007669"/>
    <property type="project" value="UniProtKB-UniRule"/>
</dbReference>
<dbReference type="GO" id="GO:0019288">
    <property type="term" value="P:isopentenyl diphosphate biosynthetic process, methylerythritol 4-phosphate pathway"/>
    <property type="evidence" value="ECO:0007669"/>
    <property type="project" value="UniProtKB-UniRule"/>
</dbReference>
<dbReference type="GO" id="GO:0016114">
    <property type="term" value="P:terpenoid biosynthetic process"/>
    <property type="evidence" value="ECO:0007669"/>
    <property type="project" value="InterPro"/>
</dbReference>
<dbReference type="Gene3D" id="3.30.230.10">
    <property type="match status" value="1"/>
</dbReference>
<dbReference type="Gene3D" id="3.30.70.890">
    <property type="entry name" value="GHMP kinase, C-terminal domain"/>
    <property type="match status" value="1"/>
</dbReference>
<dbReference type="HAMAP" id="MF_00061">
    <property type="entry name" value="IspE"/>
    <property type="match status" value="1"/>
</dbReference>
<dbReference type="InterPro" id="IPR013750">
    <property type="entry name" value="GHMP_kinase_C_dom"/>
</dbReference>
<dbReference type="InterPro" id="IPR036554">
    <property type="entry name" value="GHMP_kinase_C_sf"/>
</dbReference>
<dbReference type="InterPro" id="IPR006204">
    <property type="entry name" value="GHMP_kinase_N_dom"/>
</dbReference>
<dbReference type="InterPro" id="IPR004424">
    <property type="entry name" value="IspE"/>
</dbReference>
<dbReference type="InterPro" id="IPR020568">
    <property type="entry name" value="Ribosomal_Su5_D2-typ_SF"/>
</dbReference>
<dbReference type="InterPro" id="IPR014721">
    <property type="entry name" value="Ribsml_uS5_D2-typ_fold_subgr"/>
</dbReference>
<dbReference type="NCBIfam" id="TIGR00154">
    <property type="entry name" value="ispE"/>
    <property type="match status" value="1"/>
</dbReference>
<dbReference type="PANTHER" id="PTHR43527">
    <property type="entry name" value="4-DIPHOSPHOCYTIDYL-2-C-METHYL-D-ERYTHRITOL KINASE, CHLOROPLASTIC"/>
    <property type="match status" value="1"/>
</dbReference>
<dbReference type="PANTHER" id="PTHR43527:SF2">
    <property type="entry name" value="4-DIPHOSPHOCYTIDYL-2-C-METHYL-D-ERYTHRITOL KINASE, CHLOROPLASTIC"/>
    <property type="match status" value="1"/>
</dbReference>
<dbReference type="Pfam" id="PF08544">
    <property type="entry name" value="GHMP_kinases_C"/>
    <property type="match status" value="1"/>
</dbReference>
<dbReference type="Pfam" id="PF00288">
    <property type="entry name" value="GHMP_kinases_N"/>
    <property type="match status" value="1"/>
</dbReference>
<dbReference type="PIRSF" id="PIRSF010376">
    <property type="entry name" value="IspE"/>
    <property type="match status" value="1"/>
</dbReference>
<dbReference type="SUPFAM" id="SSF55060">
    <property type="entry name" value="GHMP Kinase, C-terminal domain"/>
    <property type="match status" value="1"/>
</dbReference>
<dbReference type="SUPFAM" id="SSF54211">
    <property type="entry name" value="Ribosomal protein S5 domain 2-like"/>
    <property type="match status" value="1"/>
</dbReference>
<reference key="1">
    <citation type="journal article" date="2015" name="Proc. Natl. Acad. Sci. U.S.A.">
        <title>Trichodesmium genome maintains abundant, widespread noncoding DNA in situ, despite oligotrophic lifestyle.</title>
        <authorList>
            <person name="Walworth N."/>
            <person name="Pfreundt U."/>
            <person name="Nelson W.C."/>
            <person name="Mincer T."/>
            <person name="Heidelberg J.F."/>
            <person name="Fu F."/>
            <person name="Waterbury J.B."/>
            <person name="Glavina del Rio T."/>
            <person name="Goodwin L."/>
            <person name="Kyrpides N.C."/>
            <person name="Land M.L."/>
            <person name="Woyke T."/>
            <person name="Hutchins D.A."/>
            <person name="Hess W.R."/>
            <person name="Webb E.A."/>
        </authorList>
    </citation>
    <scope>NUCLEOTIDE SEQUENCE [LARGE SCALE GENOMIC DNA]</scope>
    <source>
        <strain>IMS101</strain>
    </source>
</reference>
<proteinExistence type="inferred from homology"/>
<organism>
    <name type="scientific">Trichodesmium erythraeum (strain IMS101)</name>
    <dbReference type="NCBI Taxonomy" id="203124"/>
    <lineage>
        <taxon>Bacteria</taxon>
        <taxon>Bacillati</taxon>
        <taxon>Cyanobacteriota</taxon>
        <taxon>Cyanophyceae</taxon>
        <taxon>Oscillatoriophycideae</taxon>
        <taxon>Oscillatoriales</taxon>
        <taxon>Microcoleaceae</taxon>
        <taxon>Trichodesmium</taxon>
    </lineage>
</organism>
<evidence type="ECO:0000255" key="1">
    <source>
        <dbReference type="HAMAP-Rule" id="MF_00061"/>
    </source>
</evidence>
<comment type="function">
    <text evidence="1">Catalyzes the phosphorylation of the position 2 hydroxy group of 4-diphosphocytidyl-2C-methyl-D-erythritol.</text>
</comment>
<comment type="catalytic activity">
    <reaction evidence="1">
        <text>4-CDP-2-C-methyl-D-erythritol + ATP = 4-CDP-2-C-methyl-D-erythritol 2-phosphate + ADP + H(+)</text>
        <dbReference type="Rhea" id="RHEA:18437"/>
        <dbReference type="ChEBI" id="CHEBI:15378"/>
        <dbReference type="ChEBI" id="CHEBI:30616"/>
        <dbReference type="ChEBI" id="CHEBI:57823"/>
        <dbReference type="ChEBI" id="CHEBI:57919"/>
        <dbReference type="ChEBI" id="CHEBI:456216"/>
        <dbReference type="EC" id="2.7.1.148"/>
    </reaction>
</comment>
<comment type="pathway">
    <text evidence="1">Isoprenoid biosynthesis; isopentenyl diphosphate biosynthesis via DXP pathway; isopentenyl diphosphate from 1-deoxy-D-xylulose 5-phosphate: step 3/6.</text>
</comment>
<comment type="similarity">
    <text evidence="1">Belongs to the GHMP kinase family. IspE subfamily.</text>
</comment>
<sequence>MRSYSLIAPGKINLYLEIIGDRPDGYHELAMVLQSISLADKIHIRSIGIETIVVRCDHPLVPQDVDNIAYRAASLMSKEFPEVFARYGGVEITINKYIPMAAGLAGGSTNAAAVLVGLDLMWELGLTHRELQELGARLGSDVPFCIGGGTALGTRRGEILSPLPNLDHIYVVLAKYKNLSISTPWAYKTYRQKFGHTYISDTESQKSSRQRVHSGPMVSAIVEHNYKEVGELLHNDLEKVALSEYPQLLKLREAFASENVLGTMMSGSGPTMFALTESQSQAEEVRAAVKEKMADPDLEFWIAQFNSSGISIAH</sequence>
<protein>
    <recommendedName>
        <fullName evidence="1">4-diphosphocytidyl-2-C-methyl-D-erythritol kinase</fullName>
        <shortName evidence="1">CMK</shortName>
        <ecNumber evidence="1">2.7.1.148</ecNumber>
    </recommendedName>
    <alternativeName>
        <fullName evidence="1">4-(cytidine-5'-diphospho)-2-C-methyl-D-erythritol kinase</fullName>
    </alternativeName>
</protein>
<accession>Q10VR1</accession>
<feature type="chain" id="PRO_1000007900" description="4-diphosphocytidyl-2-C-methyl-D-erythritol kinase">
    <location>
        <begin position="1"/>
        <end position="314"/>
    </location>
</feature>
<feature type="active site" evidence="1">
    <location>
        <position position="11"/>
    </location>
</feature>
<feature type="active site" evidence="1">
    <location>
        <position position="141"/>
    </location>
</feature>
<feature type="binding site" evidence="1">
    <location>
        <begin position="99"/>
        <end position="109"/>
    </location>
    <ligand>
        <name>ATP</name>
        <dbReference type="ChEBI" id="CHEBI:30616"/>
    </ligand>
</feature>
<keyword id="KW-0067">ATP-binding</keyword>
<keyword id="KW-0414">Isoprene biosynthesis</keyword>
<keyword id="KW-0418">Kinase</keyword>
<keyword id="KW-0547">Nucleotide-binding</keyword>
<keyword id="KW-0808">Transferase</keyword>
<gene>
    <name evidence="1" type="primary">ispE</name>
    <name type="ordered locus">Tery_4700</name>
</gene>
<name>ISPE_TRIEI</name>